<proteinExistence type="evidence at protein level"/>
<evidence type="ECO:0000250" key="1">
    <source>
        <dbReference type="UniProtKB" id="Q9NVH2"/>
    </source>
</evidence>
<evidence type="ECO:0000256" key="2">
    <source>
        <dbReference type="SAM" id="MobiDB-lite"/>
    </source>
</evidence>
<evidence type="ECO:0000303" key="3">
    <source>
    </source>
</evidence>
<evidence type="ECO:0000305" key="4"/>
<gene>
    <name type="primary">Ints7</name>
</gene>
<keyword id="KW-0025">Alternative splicing</keyword>
<keyword id="KW-0158">Chromosome</keyword>
<keyword id="KW-0963">Cytoplasm</keyword>
<keyword id="KW-0227">DNA damage</keyword>
<keyword id="KW-0539">Nucleus</keyword>
<keyword id="KW-0597">Phosphoprotein</keyword>
<keyword id="KW-1185">Reference proteome</keyword>
<feature type="chain" id="PRO_0000259550" description="Integrator complex subunit 7">
    <location>
        <begin position="1"/>
        <end position="966"/>
    </location>
</feature>
<feature type="region of interest" description="Disordered" evidence="2">
    <location>
        <begin position="941"/>
        <end position="966"/>
    </location>
</feature>
<feature type="modified residue" description="Phosphoserine" evidence="1">
    <location>
        <position position="338"/>
    </location>
</feature>
<feature type="modified residue" description="Phosphoserine" evidence="1">
    <location>
        <position position="809"/>
    </location>
</feature>
<feature type="splice variant" id="VSP_021465" description="In isoform 2." evidence="3">
    <original>SLATVIF</original>
    <variation>RNCFFLL</variation>
    <location>
        <begin position="492"/>
        <end position="498"/>
    </location>
</feature>
<feature type="splice variant" id="VSP_021466" description="In isoform 2." evidence="3">
    <location>
        <begin position="499"/>
        <end position="966"/>
    </location>
</feature>
<feature type="sequence conflict" description="In Ref. 1; BAC39426." evidence="4" ref="1">
    <original>I</original>
    <variation>L</variation>
    <location>
        <position position="870"/>
    </location>
</feature>
<feature type="sequence conflict" description="In Ref. 1; BAC39426/BAC39671." evidence="4" ref="1">
    <original>L</original>
    <variation>Q</variation>
    <location>
        <position position="954"/>
    </location>
</feature>
<comment type="function">
    <text evidence="1">Component of the integrator complex, a multiprotein complex that terminates RNA polymerase II (Pol II) transcription in the promoter-proximal region of genes. The integrator complex provides a quality checkpoint during transcription elongation by driving premature transcription termination of transcripts that are unfavorably configured for transcriptional elongation: the complex terminates transcription by (1) catalyzing dephosphorylation of the C-terminal domain (CTD) of Pol II subunit POLR2A/RPB1 and SUPT5H/SPT5, (2) degrading the exiting nascent RNA transcript via endonuclease activity and (3) promoting the release of Pol II from bound DNA. The integrator complex is also involved in terminating the synthesis of non-coding Pol II transcripts, such as enhancer RNAs (eRNAs), small nuclear RNAs (snRNAs), telomerase RNAs and long non-coding RNAs (lncRNAs). May be not involved in the recruitment of cytoplasmic dynein to the nuclear envelope by different components of the INT complex. Plays a role in DNA damage response (DDR) signaling during the S phase.</text>
</comment>
<comment type="subunit">
    <text evidence="1">Component of the Integrator complex, composed of core subunits INTS1, INTS2, INTS3, INTS4, INTS5, INTS6, INTS7, INTS8, INTS9/RC74, INTS10, INTS11/CPSF3L, INTS12, INTS13, INTS14 and INTS15. The core complex associates with protein phosphatase 2A subunits PPP2CA and PPP2R1A, to form the Integrator-PP2A (INTAC) complex. Interacts with NABP2.</text>
</comment>
<comment type="subcellular location">
    <subcellularLocation>
        <location evidence="1">Nucleus</location>
    </subcellularLocation>
    <subcellularLocation>
        <location evidence="1">Chromosome</location>
    </subcellularLocation>
    <subcellularLocation>
        <location evidence="1">Cytoplasm</location>
    </subcellularLocation>
    <text evidence="1">Localizes to sites of DNA damage in a H2AX-independent manner.</text>
</comment>
<comment type="alternative products">
    <event type="alternative splicing"/>
    <isoform>
        <id>Q7TQK1-1</id>
        <name>1</name>
        <sequence type="displayed"/>
    </isoform>
    <isoform>
        <id>Q7TQK1-2</id>
        <name>2</name>
        <sequence type="described" ref="VSP_021465 VSP_021466"/>
    </isoform>
</comment>
<comment type="similarity">
    <text evidence="4">Belongs to the Integrator subunit 7 family.</text>
</comment>
<comment type="sequence caution" evidence="4">
    <conflict type="frameshift">
        <sequence resource="EMBL-CDS" id="BAC39426"/>
    </conflict>
</comment>
<reference key="1">
    <citation type="journal article" date="2005" name="Science">
        <title>The transcriptional landscape of the mammalian genome.</title>
        <authorList>
            <person name="Carninci P."/>
            <person name="Kasukawa T."/>
            <person name="Katayama S."/>
            <person name="Gough J."/>
            <person name="Frith M.C."/>
            <person name="Maeda N."/>
            <person name="Oyama R."/>
            <person name="Ravasi T."/>
            <person name="Lenhard B."/>
            <person name="Wells C."/>
            <person name="Kodzius R."/>
            <person name="Shimokawa K."/>
            <person name="Bajic V.B."/>
            <person name="Brenner S.E."/>
            <person name="Batalov S."/>
            <person name="Forrest A.R."/>
            <person name="Zavolan M."/>
            <person name="Davis M.J."/>
            <person name="Wilming L.G."/>
            <person name="Aidinis V."/>
            <person name="Allen J.E."/>
            <person name="Ambesi-Impiombato A."/>
            <person name="Apweiler R."/>
            <person name="Aturaliya R.N."/>
            <person name="Bailey T.L."/>
            <person name="Bansal M."/>
            <person name="Baxter L."/>
            <person name="Beisel K.W."/>
            <person name="Bersano T."/>
            <person name="Bono H."/>
            <person name="Chalk A.M."/>
            <person name="Chiu K.P."/>
            <person name="Choudhary V."/>
            <person name="Christoffels A."/>
            <person name="Clutterbuck D.R."/>
            <person name="Crowe M.L."/>
            <person name="Dalla E."/>
            <person name="Dalrymple B.P."/>
            <person name="de Bono B."/>
            <person name="Della Gatta G."/>
            <person name="di Bernardo D."/>
            <person name="Down T."/>
            <person name="Engstrom P."/>
            <person name="Fagiolini M."/>
            <person name="Faulkner G."/>
            <person name="Fletcher C.F."/>
            <person name="Fukushima T."/>
            <person name="Furuno M."/>
            <person name="Futaki S."/>
            <person name="Gariboldi M."/>
            <person name="Georgii-Hemming P."/>
            <person name="Gingeras T.R."/>
            <person name="Gojobori T."/>
            <person name="Green R.E."/>
            <person name="Gustincich S."/>
            <person name="Harbers M."/>
            <person name="Hayashi Y."/>
            <person name="Hensch T.K."/>
            <person name="Hirokawa N."/>
            <person name="Hill D."/>
            <person name="Huminiecki L."/>
            <person name="Iacono M."/>
            <person name="Ikeo K."/>
            <person name="Iwama A."/>
            <person name="Ishikawa T."/>
            <person name="Jakt M."/>
            <person name="Kanapin A."/>
            <person name="Katoh M."/>
            <person name="Kawasawa Y."/>
            <person name="Kelso J."/>
            <person name="Kitamura H."/>
            <person name="Kitano H."/>
            <person name="Kollias G."/>
            <person name="Krishnan S.P."/>
            <person name="Kruger A."/>
            <person name="Kummerfeld S.K."/>
            <person name="Kurochkin I.V."/>
            <person name="Lareau L.F."/>
            <person name="Lazarevic D."/>
            <person name="Lipovich L."/>
            <person name="Liu J."/>
            <person name="Liuni S."/>
            <person name="McWilliam S."/>
            <person name="Madan Babu M."/>
            <person name="Madera M."/>
            <person name="Marchionni L."/>
            <person name="Matsuda H."/>
            <person name="Matsuzawa S."/>
            <person name="Miki H."/>
            <person name="Mignone F."/>
            <person name="Miyake S."/>
            <person name="Morris K."/>
            <person name="Mottagui-Tabar S."/>
            <person name="Mulder N."/>
            <person name="Nakano N."/>
            <person name="Nakauchi H."/>
            <person name="Ng P."/>
            <person name="Nilsson R."/>
            <person name="Nishiguchi S."/>
            <person name="Nishikawa S."/>
            <person name="Nori F."/>
            <person name="Ohara O."/>
            <person name="Okazaki Y."/>
            <person name="Orlando V."/>
            <person name="Pang K.C."/>
            <person name="Pavan W.J."/>
            <person name="Pavesi G."/>
            <person name="Pesole G."/>
            <person name="Petrovsky N."/>
            <person name="Piazza S."/>
            <person name="Reed J."/>
            <person name="Reid J.F."/>
            <person name="Ring B.Z."/>
            <person name="Ringwald M."/>
            <person name="Rost B."/>
            <person name="Ruan Y."/>
            <person name="Salzberg S.L."/>
            <person name="Sandelin A."/>
            <person name="Schneider C."/>
            <person name="Schoenbach C."/>
            <person name="Sekiguchi K."/>
            <person name="Semple C.A."/>
            <person name="Seno S."/>
            <person name="Sessa L."/>
            <person name="Sheng Y."/>
            <person name="Shibata Y."/>
            <person name="Shimada H."/>
            <person name="Shimada K."/>
            <person name="Silva D."/>
            <person name="Sinclair B."/>
            <person name="Sperling S."/>
            <person name="Stupka E."/>
            <person name="Sugiura K."/>
            <person name="Sultana R."/>
            <person name="Takenaka Y."/>
            <person name="Taki K."/>
            <person name="Tammoja K."/>
            <person name="Tan S.L."/>
            <person name="Tang S."/>
            <person name="Taylor M.S."/>
            <person name="Tegner J."/>
            <person name="Teichmann S.A."/>
            <person name="Ueda H.R."/>
            <person name="van Nimwegen E."/>
            <person name="Verardo R."/>
            <person name="Wei C.L."/>
            <person name="Yagi K."/>
            <person name="Yamanishi H."/>
            <person name="Zabarovsky E."/>
            <person name="Zhu S."/>
            <person name="Zimmer A."/>
            <person name="Hide W."/>
            <person name="Bult C."/>
            <person name="Grimmond S.M."/>
            <person name="Teasdale R.D."/>
            <person name="Liu E.T."/>
            <person name="Brusic V."/>
            <person name="Quackenbush J."/>
            <person name="Wahlestedt C."/>
            <person name="Mattick J.S."/>
            <person name="Hume D.A."/>
            <person name="Kai C."/>
            <person name="Sasaki D."/>
            <person name="Tomaru Y."/>
            <person name="Fukuda S."/>
            <person name="Kanamori-Katayama M."/>
            <person name="Suzuki M."/>
            <person name="Aoki J."/>
            <person name="Arakawa T."/>
            <person name="Iida J."/>
            <person name="Imamura K."/>
            <person name="Itoh M."/>
            <person name="Kato T."/>
            <person name="Kawaji H."/>
            <person name="Kawagashira N."/>
            <person name="Kawashima T."/>
            <person name="Kojima M."/>
            <person name="Kondo S."/>
            <person name="Konno H."/>
            <person name="Nakano K."/>
            <person name="Ninomiya N."/>
            <person name="Nishio T."/>
            <person name="Okada M."/>
            <person name="Plessy C."/>
            <person name="Shibata K."/>
            <person name="Shiraki T."/>
            <person name="Suzuki S."/>
            <person name="Tagami M."/>
            <person name="Waki K."/>
            <person name="Watahiki A."/>
            <person name="Okamura-Oho Y."/>
            <person name="Suzuki H."/>
            <person name="Kawai J."/>
            <person name="Hayashizaki Y."/>
        </authorList>
    </citation>
    <scope>NUCLEOTIDE SEQUENCE [LARGE SCALE MRNA] (ISOFORMS 1 AND 2)</scope>
    <source>
        <strain>C57BL/6J</strain>
        <tissue>Head</tissue>
        <tissue>Kidney</tissue>
    </source>
</reference>
<reference key="2">
    <citation type="journal article" date="2004" name="Genome Res.">
        <title>The status, quality, and expansion of the NIH full-length cDNA project: the Mammalian Gene Collection (MGC).</title>
        <authorList>
            <consortium name="The MGC Project Team"/>
        </authorList>
    </citation>
    <scope>NUCLEOTIDE SEQUENCE [LARGE SCALE MRNA] (ISOFORM 1)</scope>
    <source>
        <tissue>Limb</tissue>
    </source>
</reference>
<reference key="3">
    <citation type="journal article" date="2010" name="Cell">
        <title>A tissue-specific atlas of mouse protein phosphorylation and expression.</title>
        <authorList>
            <person name="Huttlin E.L."/>
            <person name="Jedrychowski M.P."/>
            <person name="Elias J.E."/>
            <person name="Goswami T."/>
            <person name="Rad R."/>
            <person name="Beausoleil S.A."/>
            <person name="Villen J."/>
            <person name="Haas W."/>
            <person name="Sowa M.E."/>
            <person name="Gygi S.P."/>
        </authorList>
    </citation>
    <scope>IDENTIFICATION BY MASS SPECTROMETRY [LARGE SCALE ANALYSIS]</scope>
    <source>
        <tissue>Kidney</tissue>
        <tissue>Liver</tissue>
        <tissue>Spleen</tissue>
        <tissue>Testis</tissue>
    </source>
</reference>
<protein>
    <recommendedName>
        <fullName>Integrator complex subunit 7</fullName>
        <shortName>Int7</shortName>
    </recommendedName>
</protein>
<accession>Q7TQK1</accession>
<accession>Q8C3A9</accession>
<accession>Q8C3N4</accession>
<accession>Q8C3N6</accession>
<dbReference type="EMBL" id="AK085336">
    <property type="protein sequence ID" value="BAC39426.1"/>
    <property type="status" value="ALT_SEQ"/>
    <property type="molecule type" value="mRNA"/>
</dbReference>
<dbReference type="EMBL" id="AK085362">
    <property type="protein sequence ID" value="BAC39430.1"/>
    <property type="molecule type" value="mRNA"/>
</dbReference>
<dbReference type="EMBL" id="AK086462">
    <property type="protein sequence ID" value="BAC39671.1"/>
    <property type="molecule type" value="mRNA"/>
</dbReference>
<dbReference type="EMBL" id="BC054120">
    <property type="protein sequence ID" value="AAH54120.1"/>
    <property type="molecule type" value="mRNA"/>
</dbReference>
<dbReference type="CCDS" id="CCDS35825.1">
    <molecule id="Q7TQK1-1"/>
</dbReference>
<dbReference type="RefSeq" id="NP_001293132.1">
    <property type="nucleotide sequence ID" value="NM_001306203.1"/>
</dbReference>
<dbReference type="RefSeq" id="NP_001293133.1">
    <property type="nucleotide sequence ID" value="NM_001306204.1"/>
</dbReference>
<dbReference type="RefSeq" id="NP_848747.4">
    <property type="nucleotide sequence ID" value="NM_178632.6"/>
</dbReference>
<dbReference type="SMR" id="Q7TQK1"/>
<dbReference type="BioGRID" id="218493">
    <property type="interactions" value="6"/>
</dbReference>
<dbReference type="FunCoup" id="Q7TQK1">
    <property type="interactions" value="3698"/>
</dbReference>
<dbReference type="IntAct" id="Q7TQK1">
    <property type="interactions" value="1"/>
</dbReference>
<dbReference type="MINT" id="Q7TQK1"/>
<dbReference type="STRING" id="10090.ENSMUSP00000036277"/>
<dbReference type="iPTMnet" id="Q7TQK1"/>
<dbReference type="PhosphoSitePlus" id="Q7TQK1"/>
<dbReference type="PaxDb" id="10090-ENSMUSP00000036277"/>
<dbReference type="PeptideAtlas" id="Q7TQK1"/>
<dbReference type="ProteomicsDB" id="301653">
    <molecule id="Q7TQK1-1"/>
</dbReference>
<dbReference type="ProteomicsDB" id="301654">
    <molecule id="Q7TQK1-2"/>
</dbReference>
<dbReference type="Pumba" id="Q7TQK1"/>
<dbReference type="DNASU" id="77065"/>
<dbReference type="GeneID" id="77065"/>
<dbReference type="KEGG" id="mmu:77065"/>
<dbReference type="UCSC" id="uc007eco.1">
    <molecule id="Q7TQK1-2"/>
    <property type="organism name" value="mouse"/>
</dbReference>
<dbReference type="UCSC" id="uc007ecp.1">
    <molecule id="Q7TQK1-1"/>
    <property type="organism name" value="mouse"/>
</dbReference>
<dbReference type="AGR" id="MGI:1924315"/>
<dbReference type="CTD" id="25896"/>
<dbReference type="MGI" id="MGI:1924315">
    <property type="gene designation" value="Ints7"/>
</dbReference>
<dbReference type="eggNOG" id="KOG1988">
    <property type="taxonomic scope" value="Eukaryota"/>
</dbReference>
<dbReference type="InParanoid" id="Q7TQK1"/>
<dbReference type="OrthoDB" id="1921953at2759"/>
<dbReference type="PhylomeDB" id="Q7TQK1"/>
<dbReference type="TreeFam" id="TF106105"/>
<dbReference type="Reactome" id="R-MMU-6807505">
    <property type="pathway name" value="RNA polymerase II transcribes snRNA genes"/>
</dbReference>
<dbReference type="BioGRID-ORCS" id="77065">
    <property type="hits" value="24 hits in 81 CRISPR screens"/>
</dbReference>
<dbReference type="ChiTaRS" id="Ints7">
    <property type="organism name" value="mouse"/>
</dbReference>
<dbReference type="PRO" id="PR:Q7TQK1"/>
<dbReference type="Proteomes" id="UP000000589">
    <property type="component" value="Unplaced"/>
</dbReference>
<dbReference type="RNAct" id="Q7TQK1">
    <property type="molecule type" value="protein"/>
</dbReference>
<dbReference type="GO" id="GO:0005694">
    <property type="term" value="C:chromosome"/>
    <property type="evidence" value="ECO:0007669"/>
    <property type="project" value="UniProtKB-SubCell"/>
</dbReference>
<dbReference type="GO" id="GO:0005737">
    <property type="term" value="C:cytoplasm"/>
    <property type="evidence" value="ECO:0000250"/>
    <property type="project" value="UniProtKB"/>
</dbReference>
<dbReference type="GO" id="GO:0160232">
    <property type="term" value="C:INTAC complex"/>
    <property type="evidence" value="ECO:0000250"/>
    <property type="project" value="UniProtKB"/>
</dbReference>
<dbReference type="GO" id="GO:0032039">
    <property type="term" value="C:integrator complex"/>
    <property type="evidence" value="ECO:0000250"/>
    <property type="project" value="HGNC"/>
</dbReference>
<dbReference type="GO" id="GO:0005634">
    <property type="term" value="C:nucleus"/>
    <property type="evidence" value="ECO:0000250"/>
    <property type="project" value="UniProtKB"/>
</dbReference>
<dbReference type="GO" id="GO:0006974">
    <property type="term" value="P:DNA damage response"/>
    <property type="evidence" value="ECO:0007669"/>
    <property type="project" value="UniProtKB-KW"/>
</dbReference>
<dbReference type="GO" id="GO:0160240">
    <property type="term" value="P:RNA polymerase II transcription initiation surveillance"/>
    <property type="evidence" value="ECO:0000250"/>
    <property type="project" value="UniProtKB"/>
</dbReference>
<dbReference type="GO" id="GO:0016180">
    <property type="term" value="P:snRNA processing"/>
    <property type="evidence" value="ECO:0000250"/>
    <property type="project" value="HGNC"/>
</dbReference>
<dbReference type="FunFam" id="1.25.10.10:FF:001004">
    <property type="entry name" value="Integrator complex subunit 7"/>
    <property type="match status" value="1"/>
</dbReference>
<dbReference type="Gene3D" id="1.25.10.10">
    <property type="entry name" value="Leucine-rich Repeat Variant"/>
    <property type="match status" value="1"/>
</dbReference>
<dbReference type="InterPro" id="IPR011989">
    <property type="entry name" value="ARM-like"/>
</dbReference>
<dbReference type="InterPro" id="IPR016024">
    <property type="entry name" value="ARM-type_fold"/>
</dbReference>
<dbReference type="InterPro" id="IPR033060">
    <property type="entry name" value="INTS7"/>
</dbReference>
<dbReference type="InterPro" id="IPR054519">
    <property type="entry name" value="INTS7_C"/>
</dbReference>
<dbReference type="InterPro" id="IPR056517">
    <property type="entry name" value="INTS7_HB"/>
</dbReference>
<dbReference type="InterPro" id="IPR056516">
    <property type="entry name" value="INTS7_N"/>
</dbReference>
<dbReference type="PANTHER" id="PTHR13322">
    <property type="entry name" value="C1ORF73 PROTEIN"/>
    <property type="match status" value="1"/>
</dbReference>
<dbReference type="PANTHER" id="PTHR13322:SF2">
    <property type="entry name" value="INTEGRATOR COMPLEX SUBUNIT 7"/>
    <property type="match status" value="1"/>
</dbReference>
<dbReference type="Pfam" id="PF22965">
    <property type="entry name" value="INTS7_C"/>
    <property type="match status" value="1"/>
</dbReference>
<dbReference type="Pfam" id="PF24437">
    <property type="entry name" value="INTS7_HB"/>
    <property type="match status" value="1"/>
</dbReference>
<dbReference type="Pfam" id="PF24436">
    <property type="entry name" value="INTS7_N"/>
    <property type="match status" value="1"/>
</dbReference>
<dbReference type="SUPFAM" id="SSF48371">
    <property type="entry name" value="ARM repeat"/>
    <property type="match status" value="1"/>
</dbReference>
<sequence>MASNSTKSFLADAGYGEQELDANSALMELDKGLRSGKLGEQCEAVVRFPRLFQKYPFPILINSAFLKLADVFRVGNNFLRLCVLKVTQQSEKHLEKILNVDEFVKRVFSVIHSNDPVARAITLRMLGSLASIIPERKNAHHSIRQSLDSHDNVEVEAAVFAAANFSAQSKDFAVGICNKISEMIQGLATPVDLKLKLIPILQHMHHDALLASSARQLLQQLVTSYPSTKMVIVSLHTFTLLAASSLVDTPKQIQLLLQYLKNDPRKAVKRLAVQDLKLLASKTPHTWSKENIQALCECALHTPYDSLKLGMLSVLSTLSGTIAIKHYFSVVPGNVGSSPRSSDLVKLAQECCYHSNRGIAAHGVRVLTNITVSCQEKDLLSLEQDAVFGLESLLVLCSQDDSPGAQSTVKSALSCMVKLAKGRPHLSRSVVDTLLTQLHSSQDAARILMCHCLAAIAMQLPVLGDGMLGDLVELYKVIGRSATDKQQELLVSLATVIFVASQKALSAEVKAVIKQQLESVSSGWTVYRIARQASRMGNHDMARELYQSLLTQVASEHFYFWLNSLKEFSHAEQCLTGLQEDSFSSALSCIAESLKFYHKGIASLTAASTPLNPLSFQCEFVKLRIDLLQAFSQLICTCNSLKTSPPPAIATTIAMTLGNDLQRCGRISNQMKQSMEEFRSLASRYRDLYQASFDADSATLRNVELQQQSCLLIAHAIEALVLDPESASFQEYGSTGAAHADSEYERRMMSVYSRVLEEVESLNRKYAPVSYMHTACLCNAIIALLKVPLSFQRYFFQKLQSTSIKLALSPSPRSPAEPIAVQNNQQLALKVEGVVQHGSKPGLFRRVQSVCLNVSSTLQSKSGQDYKIPIDSMTNEMEQRVEPHNDYFSTQFLLNFAVLGTHSITVESSVRDANGIVWKTGPRTTMFVKSLEDPYSQQIRLQQQAQQPLQPQPLPQPQPRSAYTRF</sequence>
<organism>
    <name type="scientific">Mus musculus</name>
    <name type="common">Mouse</name>
    <dbReference type="NCBI Taxonomy" id="10090"/>
    <lineage>
        <taxon>Eukaryota</taxon>
        <taxon>Metazoa</taxon>
        <taxon>Chordata</taxon>
        <taxon>Craniata</taxon>
        <taxon>Vertebrata</taxon>
        <taxon>Euteleostomi</taxon>
        <taxon>Mammalia</taxon>
        <taxon>Eutheria</taxon>
        <taxon>Euarchontoglires</taxon>
        <taxon>Glires</taxon>
        <taxon>Rodentia</taxon>
        <taxon>Myomorpha</taxon>
        <taxon>Muroidea</taxon>
        <taxon>Muridae</taxon>
        <taxon>Murinae</taxon>
        <taxon>Mus</taxon>
        <taxon>Mus</taxon>
    </lineage>
</organism>
<name>INT7_MOUSE</name>